<reference key="1">
    <citation type="journal article" date="2007" name="PLoS ONE">
        <title>Analysis of the neurotoxin complex genes in Clostridium botulinum A1-A4 and B1 strains: BoNT/A3, /Ba4 and /B1 clusters are located within plasmids.</title>
        <authorList>
            <person name="Smith T.J."/>
            <person name="Hill K.K."/>
            <person name="Foley B.T."/>
            <person name="Detter J.C."/>
            <person name="Munk A.C."/>
            <person name="Bruce D.C."/>
            <person name="Doggett N.A."/>
            <person name="Smith L.A."/>
            <person name="Marks J.D."/>
            <person name="Xie G."/>
            <person name="Brettin T.S."/>
        </authorList>
    </citation>
    <scope>NUCLEOTIDE SEQUENCE [LARGE SCALE GENOMIC DNA]</scope>
    <source>
        <strain>Loch Maree / Type A3</strain>
    </source>
</reference>
<proteinExistence type="inferred from homology"/>
<evidence type="ECO:0000255" key="1">
    <source>
        <dbReference type="HAMAP-Rule" id="MF_00019"/>
    </source>
</evidence>
<dbReference type="EC" id="2.3.1.274" evidence="1"/>
<dbReference type="EMBL" id="CP000962">
    <property type="protein sequence ID" value="ACA55334.1"/>
    <property type="molecule type" value="Genomic_DNA"/>
</dbReference>
<dbReference type="RefSeq" id="WP_012343329.1">
    <property type="nucleotide sequence ID" value="NC_010520.1"/>
</dbReference>
<dbReference type="SMR" id="B1KWP6"/>
<dbReference type="KEGG" id="cbl:CLK_1833"/>
<dbReference type="HOGENOM" id="CLU_039379_1_1_9"/>
<dbReference type="UniPathway" id="UPA00085"/>
<dbReference type="GO" id="GO:0005737">
    <property type="term" value="C:cytoplasm"/>
    <property type="evidence" value="ECO:0007669"/>
    <property type="project" value="UniProtKB-SubCell"/>
</dbReference>
<dbReference type="GO" id="GO:0043811">
    <property type="term" value="F:phosphate:acyl-[acyl carrier protein] acyltransferase activity"/>
    <property type="evidence" value="ECO:0007669"/>
    <property type="project" value="UniProtKB-UniRule"/>
</dbReference>
<dbReference type="GO" id="GO:0006633">
    <property type="term" value="P:fatty acid biosynthetic process"/>
    <property type="evidence" value="ECO:0007669"/>
    <property type="project" value="UniProtKB-UniRule"/>
</dbReference>
<dbReference type="GO" id="GO:0008654">
    <property type="term" value="P:phospholipid biosynthetic process"/>
    <property type="evidence" value="ECO:0007669"/>
    <property type="project" value="UniProtKB-KW"/>
</dbReference>
<dbReference type="Gene3D" id="3.40.718.10">
    <property type="entry name" value="Isopropylmalate Dehydrogenase"/>
    <property type="match status" value="1"/>
</dbReference>
<dbReference type="HAMAP" id="MF_00019">
    <property type="entry name" value="PlsX"/>
    <property type="match status" value="1"/>
</dbReference>
<dbReference type="InterPro" id="IPR003664">
    <property type="entry name" value="FA_synthesis"/>
</dbReference>
<dbReference type="InterPro" id="IPR012281">
    <property type="entry name" value="Phospholipid_synth_PlsX-like"/>
</dbReference>
<dbReference type="NCBIfam" id="TIGR00182">
    <property type="entry name" value="plsX"/>
    <property type="match status" value="1"/>
</dbReference>
<dbReference type="PANTHER" id="PTHR30100">
    <property type="entry name" value="FATTY ACID/PHOSPHOLIPID SYNTHESIS PROTEIN PLSX"/>
    <property type="match status" value="1"/>
</dbReference>
<dbReference type="PANTHER" id="PTHR30100:SF1">
    <property type="entry name" value="PHOSPHATE ACYLTRANSFERASE"/>
    <property type="match status" value="1"/>
</dbReference>
<dbReference type="Pfam" id="PF02504">
    <property type="entry name" value="FA_synthesis"/>
    <property type="match status" value="1"/>
</dbReference>
<dbReference type="PIRSF" id="PIRSF002465">
    <property type="entry name" value="Phsphlp_syn_PlsX"/>
    <property type="match status" value="1"/>
</dbReference>
<dbReference type="SUPFAM" id="SSF53659">
    <property type="entry name" value="Isocitrate/Isopropylmalate dehydrogenase-like"/>
    <property type="match status" value="1"/>
</dbReference>
<organism>
    <name type="scientific">Clostridium botulinum (strain Loch Maree / Type A3)</name>
    <dbReference type="NCBI Taxonomy" id="498214"/>
    <lineage>
        <taxon>Bacteria</taxon>
        <taxon>Bacillati</taxon>
        <taxon>Bacillota</taxon>
        <taxon>Clostridia</taxon>
        <taxon>Eubacteriales</taxon>
        <taxon>Clostridiaceae</taxon>
        <taxon>Clostridium</taxon>
    </lineage>
</organism>
<name>PLSX_CLOBM</name>
<gene>
    <name evidence="1" type="primary">plsX</name>
    <name type="ordered locus">CLK_1833</name>
</gene>
<feature type="chain" id="PRO_1000089894" description="Phosphate acyltransferase">
    <location>
        <begin position="1"/>
        <end position="335"/>
    </location>
</feature>
<comment type="function">
    <text evidence="1">Catalyzes the reversible formation of acyl-phosphate (acyl-PO(4)) from acyl-[acyl-carrier-protein] (acyl-ACP). This enzyme utilizes acyl-ACP as fatty acyl donor, but not acyl-CoA.</text>
</comment>
<comment type="catalytic activity">
    <reaction evidence="1">
        <text>a fatty acyl-[ACP] + phosphate = an acyl phosphate + holo-[ACP]</text>
        <dbReference type="Rhea" id="RHEA:42292"/>
        <dbReference type="Rhea" id="RHEA-COMP:9685"/>
        <dbReference type="Rhea" id="RHEA-COMP:14125"/>
        <dbReference type="ChEBI" id="CHEBI:43474"/>
        <dbReference type="ChEBI" id="CHEBI:59918"/>
        <dbReference type="ChEBI" id="CHEBI:64479"/>
        <dbReference type="ChEBI" id="CHEBI:138651"/>
        <dbReference type="EC" id="2.3.1.274"/>
    </reaction>
</comment>
<comment type="pathway">
    <text evidence="1">Lipid metabolism; phospholipid metabolism.</text>
</comment>
<comment type="subunit">
    <text evidence="1">Homodimer. Probably interacts with PlsY.</text>
</comment>
<comment type="subcellular location">
    <subcellularLocation>
        <location evidence="1">Cytoplasm</location>
    </subcellularLocation>
    <text evidence="1">Associated with the membrane possibly through PlsY.</text>
</comment>
<comment type="similarity">
    <text evidence="1">Belongs to the PlsX family.</text>
</comment>
<accession>B1KWP6</accession>
<protein>
    <recommendedName>
        <fullName evidence="1">Phosphate acyltransferase</fullName>
        <ecNumber evidence="1">2.3.1.274</ecNumber>
    </recommendedName>
    <alternativeName>
        <fullName evidence="1">Acyl-ACP phosphotransacylase</fullName>
    </alternativeName>
    <alternativeName>
        <fullName evidence="1">Acyl-[acyl-carrier-protein]--phosphate acyltransferase</fullName>
    </alternativeName>
    <alternativeName>
        <fullName evidence="1">Phosphate-acyl-ACP acyltransferase</fullName>
    </alternativeName>
</protein>
<keyword id="KW-0963">Cytoplasm</keyword>
<keyword id="KW-0444">Lipid biosynthesis</keyword>
<keyword id="KW-0443">Lipid metabolism</keyword>
<keyword id="KW-0594">Phospholipid biosynthesis</keyword>
<keyword id="KW-1208">Phospholipid metabolism</keyword>
<keyword id="KW-0808">Transferase</keyword>
<sequence length="335" mass="36252">MIIAVDGMGGDFAPELVVEGCIQAVKEYEGIHIIITGKKELIKNELDKREYKGNKIEILNAEEVISTNEAPVKAIRRKKDSSMVKALELVKEGKAQAVISAGSTGALMAGATFVLGRIKGINRVCLAPLLPGAKAPFMIVDAGANVDCKAEYLVQFAMMGKVYFESVLGVKSPTVGLVNIGAEEEKGNELTKAAYKLLKDTDFNFIGNIEPRDIPRGEVNIAVCDGFIGNTVLKTYEGVASNLFSMLKDEMMASTRGKIGGALLKPVFKDFKKKFDYTEYGGSPFLGAKGICIKAHGSSDAKAFKNAIRQAKICYDKKIIEEIENNLGNLIENNI</sequence>